<gene>
    <name evidence="1" type="primary">der</name>
    <name type="synonym">engA</name>
    <name type="ordered locus">MGAS10750_Spy0282</name>
</gene>
<protein>
    <recommendedName>
        <fullName evidence="1">GTPase Der</fullName>
    </recommendedName>
    <alternativeName>
        <fullName evidence="1">GTP-binding protein EngA</fullName>
    </alternativeName>
</protein>
<name>DER_STRPF</name>
<feature type="chain" id="PRO_1000011756" description="GTPase Der">
    <location>
        <begin position="1"/>
        <end position="436"/>
    </location>
</feature>
<feature type="domain" description="EngA-type G 1">
    <location>
        <begin position="4"/>
        <end position="167"/>
    </location>
</feature>
<feature type="domain" description="EngA-type G 2">
    <location>
        <begin position="175"/>
        <end position="351"/>
    </location>
</feature>
<feature type="domain" description="KH-like" evidence="1">
    <location>
        <begin position="352"/>
        <end position="436"/>
    </location>
</feature>
<feature type="binding site" evidence="1">
    <location>
        <begin position="10"/>
        <end position="17"/>
    </location>
    <ligand>
        <name>GTP</name>
        <dbReference type="ChEBI" id="CHEBI:37565"/>
        <label>1</label>
    </ligand>
</feature>
<feature type="binding site" evidence="1">
    <location>
        <begin position="57"/>
        <end position="61"/>
    </location>
    <ligand>
        <name>GTP</name>
        <dbReference type="ChEBI" id="CHEBI:37565"/>
        <label>1</label>
    </ligand>
</feature>
<feature type="binding site" evidence="1">
    <location>
        <begin position="119"/>
        <end position="122"/>
    </location>
    <ligand>
        <name>GTP</name>
        <dbReference type="ChEBI" id="CHEBI:37565"/>
        <label>1</label>
    </ligand>
</feature>
<feature type="binding site" evidence="1">
    <location>
        <begin position="181"/>
        <end position="188"/>
    </location>
    <ligand>
        <name>GTP</name>
        <dbReference type="ChEBI" id="CHEBI:37565"/>
        <label>2</label>
    </ligand>
</feature>
<feature type="binding site" evidence="1">
    <location>
        <begin position="229"/>
        <end position="233"/>
    </location>
    <ligand>
        <name>GTP</name>
        <dbReference type="ChEBI" id="CHEBI:37565"/>
        <label>2</label>
    </ligand>
</feature>
<feature type="binding site" evidence="1">
    <location>
        <begin position="294"/>
        <end position="297"/>
    </location>
    <ligand>
        <name>GTP</name>
        <dbReference type="ChEBI" id="CHEBI:37565"/>
        <label>2</label>
    </ligand>
</feature>
<proteinExistence type="inferred from homology"/>
<keyword id="KW-0342">GTP-binding</keyword>
<keyword id="KW-0547">Nucleotide-binding</keyword>
<keyword id="KW-0677">Repeat</keyword>
<keyword id="KW-0690">Ribosome biogenesis</keyword>
<comment type="function">
    <text evidence="1">GTPase that plays an essential role in the late steps of ribosome biogenesis.</text>
</comment>
<comment type="subunit">
    <text evidence="1">Associates with the 50S ribosomal subunit.</text>
</comment>
<comment type="similarity">
    <text evidence="1">Belongs to the TRAFAC class TrmE-Era-EngA-EngB-Septin-like GTPase superfamily. EngA (Der) GTPase family.</text>
</comment>
<reference key="1">
    <citation type="journal article" date="2006" name="Proc. Natl. Acad. Sci. U.S.A.">
        <title>Molecular genetic anatomy of inter- and intraserotype variation in the human bacterial pathogen group A Streptococcus.</title>
        <authorList>
            <person name="Beres S.B."/>
            <person name="Richter E.W."/>
            <person name="Nagiec M.J."/>
            <person name="Sumby P."/>
            <person name="Porcella S.F."/>
            <person name="DeLeo F.R."/>
            <person name="Musser J.M."/>
        </authorList>
    </citation>
    <scope>NUCLEOTIDE SEQUENCE [LARGE SCALE GENOMIC DNA]</scope>
    <source>
        <strain>MGAS10750</strain>
    </source>
</reference>
<accession>Q1J8C9</accession>
<sequence length="436" mass="48802">MVLPTVAIVGRPNVGKSTLFNRIAGERISIVEDVEGVTRDRIYATGEWLNRQFSLIDTGGIDDVDAPFMEQIKHQAQIAMEEADVIVFVVSGKEGVTDADEYVSKILYRTNTPVILAVNKVDNPEMRNDIYDFYSLGLGDPYPVSSVHGIGTGDVLDAIVENLPVEEAEENDDIIRFSLIGRPNVGKSSLINAILGEDRVIASPVAGTTRDAIDTHFTDADGQEFTMIDTAGMRKSGKIYENTEKYSVMRAMRAIDRSDVVLMVINAEEGIREYDKRIAGFAHEAGKGMIIVVNKWDTLDKDNHTVAKWEADIRDQFQFLTYAPIIFVSALTKQRLNKLPDLIKRISESQNKRIPSAVLNDVIMDAIAINPTPTDKGKRLKIFYATQVSVKPPTFVVFVNEEELMHFSYLRFLENQIRAAFTFEGTPIHLIARKRK</sequence>
<organism>
    <name type="scientific">Streptococcus pyogenes serotype M4 (strain MGAS10750)</name>
    <dbReference type="NCBI Taxonomy" id="370554"/>
    <lineage>
        <taxon>Bacteria</taxon>
        <taxon>Bacillati</taxon>
        <taxon>Bacillota</taxon>
        <taxon>Bacilli</taxon>
        <taxon>Lactobacillales</taxon>
        <taxon>Streptococcaceae</taxon>
        <taxon>Streptococcus</taxon>
    </lineage>
</organism>
<dbReference type="EMBL" id="CP000262">
    <property type="protein sequence ID" value="ABF37232.1"/>
    <property type="molecule type" value="Genomic_DNA"/>
</dbReference>
<dbReference type="SMR" id="Q1J8C9"/>
<dbReference type="KEGG" id="spi:MGAS10750_Spy0282"/>
<dbReference type="HOGENOM" id="CLU_016077_6_2_9"/>
<dbReference type="Proteomes" id="UP000002434">
    <property type="component" value="Chromosome"/>
</dbReference>
<dbReference type="GO" id="GO:0005525">
    <property type="term" value="F:GTP binding"/>
    <property type="evidence" value="ECO:0007669"/>
    <property type="project" value="UniProtKB-UniRule"/>
</dbReference>
<dbReference type="GO" id="GO:0043022">
    <property type="term" value="F:ribosome binding"/>
    <property type="evidence" value="ECO:0007669"/>
    <property type="project" value="TreeGrafter"/>
</dbReference>
<dbReference type="GO" id="GO:0042254">
    <property type="term" value="P:ribosome biogenesis"/>
    <property type="evidence" value="ECO:0007669"/>
    <property type="project" value="UniProtKB-KW"/>
</dbReference>
<dbReference type="CDD" id="cd01894">
    <property type="entry name" value="EngA1"/>
    <property type="match status" value="1"/>
</dbReference>
<dbReference type="CDD" id="cd01895">
    <property type="entry name" value="EngA2"/>
    <property type="match status" value="1"/>
</dbReference>
<dbReference type="FunFam" id="3.30.300.20:FF:000004">
    <property type="entry name" value="GTPase Der"/>
    <property type="match status" value="1"/>
</dbReference>
<dbReference type="FunFam" id="3.40.50.300:FF:000040">
    <property type="entry name" value="GTPase Der"/>
    <property type="match status" value="1"/>
</dbReference>
<dbReference type="FunFam" id="3.40.50.300:FF:000057">
    <property type="entry name" value="GTPase Der"/>
    <property type="match status" value="1"/>
</dbReference>
<dbReference type="Gene3D" id="3.30.300.20">
    <property type="match status" value="1"/>
</dbReference>
<dbReference type="Gene3D" id="3.40.50.300">
    <property type="entry name" value="P-loop containing nucleotide triphosphate hydrolases"/>
    <property type="match status" value="2"/>
</dbReference>
<dbReference type="HAMAP" id="MF_00195">
    <property type="entry name" value="GTPase_Der"/>
    <property type="match status" value="1"/>
</dbReference>
<dbReference type="InterPro" id="IPR031166">
    <property type="entry name" value="G_ENGA"/>
</dbReference>
<dbReference type="InterPro" id="IPR006073">
    <property type="entry name" value="GTP-bd"/>
</dbReference>
<dbReference type="InterPro" id="IPR016484">
    <property type="entry name" value="GTPase_Der"/>
</dbReference>
<dbReference type="InterPro" id="IPR032859">
    <property type="entry name" value="KH_dom-like"/>
</dbReference>
<dbReference type="InterPro" id="IPR015946">
    <property type="entry name" value="KH_dom-like_a/b"/>
</dbReference>
<dbReference type="InterPro" id="IPR027417">
    <property type="entry name" value="P-loop_NTPase"/>
</dbReference>
<dbReference type="InterPro" id="IPR005225">
    <property type="entry name" value="Small_GTP-bd"/>
</dbReference>
<dbReference type="NCBIfam" id="TIGR03594">
    <property type="entry name" value="GTPase_EngA"/>
    <property type="match status" value="1"/>
</dbReference>
<dbReference type="NCBIfam" id="TIGR00231">
    <property type="entry name" value="small_GTP"/>
    <property type="match status" value="2"/>
</dbReference>
<dbReference type="PANTHER" id="PTHR43834">
    <property type="entry name" value="GTPASE DER"/>
    <property type="match status" value="1"/>
</dbReference>
<dbReference type="PANTHER" id="PTHR43834:SF6">
    <property type="entry name" value="GTPASE DER"/>
    <property type="match status" value="1"/>
</dbReference>
<dbReference type="Pfam" id="PF14714">
    <property type="entry name" value="KH_dom-like"/>
    <property type="match status" value="1"/>
</dbReference>
<dbReference type="Pfam" id="PF01926">
    <property type="entry name" value="MMR_HSR1"/>
    <property type="match status" value="2"/>
</dbReference>
<dbReference type="PIRSF" id="PIRSF006485">
    <property type="entry name" value="GTP-binding_EngA"/>
    <property type="match status" value="1"/>
</dbReference>
<dbReference type="PRINTS" id="PR00326">
    <property type="entry name" value="GTP1OBG"/>
</dbReference>
<dbReference type="SUPFAM" id="SSF52540">
    <property type="entry name" value="P-loop containing nucleoside triphosphate hydrolases"/>
    <property type="match status" value="2"/>
</dbReference>
<dbReference type="PROSITE" id="PS51712">
    <property type="entry name" value="G_ENGA"/>
    <property type="match status" value="2"/>
</dbReference>
<evidence type="ECO:0000255" key="1">
    <source>
        <dbReference type="HAMAP-Rule" id="MF_00195"/>
    </source>
</evidence>